<proteinExistence type="evidence at protein level"/>
<feature type="chain" id="PRO_0000072157" description="Spore coat polysaccharide biosynthesis protein SpsE">
    <location>
        <begin position="1"/>
        <end position="373"/>
    </location>
</feature>
<feature type="domain" description="AFP-like" evidence="1">
    <location>
        <begin position="305"/>
        <end position="367"/>
    </location>
</feature>
<feature type="strand" evidence="2">
    <location>
        <begin position="3"/>
        <end position="6"/>
    </location>
</feature>
<feature type="strand" evidence="2">
    <location>
        <begin position="9"/>
        <end position="12"/>
    </location>
</feature>
<feature type="strand" evidence="2">
    <location>
        <begin position="18"/>
        <end position="24"/>
    </location>
</feature>
<feature type="turn" evidence="2">
    <location>
        <begin position="25"/>
        <end position="29"/>
    </location>
</feature>
<feature type="helix" evidence="2">
    <location>
        <begin position="31"/>
        <end position="44"/>
    </location>
</feature>
<feature type="strand" evidence="2">
    <location>
        <begin position="47"/>
        <end position="51"/>
    </location>
</feature>
<feature type="helix" evidence="2">
    <location>
        <begin position="56"/>
        <end position="59"/>
    </location>
</feature>
<feature type="helix" evidence="2">
    <location>
        <begin position="77"/>
        <end position="80"/>
    </location>
</feature>
<feature type="helix" evidence="2">
    <location>
        <begin position="81"/>
        <end position="83"/>
    </location>
</feature>
<feature type="strand" evidence="2">
    <location>
        <begin position="84"/>
        <end position="86"/>
    </location>
</feature>
<feature type="helix" evidence="2">
    <location>
        <begin position="88"/>
        <end position="90"/>
    </location>
</feature>
<feature type="helix" evidence="2">
    <location>
        <begin position="91"/>
        <end position="100"/>
    </location>
</feature>
<feature type="strand" evidence="2">
    <location>
        <begin position="104"/>
        <end position="106"/>
    </location>
</feature>
<feature type="helix" evidence="2">
    <location>
        <begin position="112"/>
        <end position="119"/>
    </location>
</feature>
<feature type="strand" evidence="2">
    <location>
        <begin position="126"/>
        <end position="128"/>
    </location>
</feature>
<feature type="helix" evidence="2">
    <location>
        <begin position="130"/>
        <end position="132"/>
    </location>
</feature>
<feature type="helix" evidence="2">
    <location>
        <begin position="136"/>
        <end position="143"/>
    </location>
</feature>
<feature type="strand" evidence="2">
    <location>
        <begin position="149"/>
        <end position="152"/>
    </location>
</feature>
<feature type="helix" evidence="2">
    <location>
        <begin position="158"/>
        <end position="169"/>
    </location>
</feature>
<feature type="turn" evidence="2">
    <location>
        <begin position="170"/>
        <end position="172"/>
    </location>
</feature>
<feature type="strand" evidence="2">
    <location>
        <begin position="176"/>
        <end position="181"/>
    </location>
</feature>
<feature type="strand" evidence="2">
    <location>
        <begin position="183"/>
        <end position="186"/>
    </location>
</feature>
<feature type="helix" evidence="2">
    <location>
        <begin position="189"/>
        <end position="191"/>
    </location>
</feature>
<feature type="helix" evidence="2">
    <location>
        <begin position="196"/>
        <end position="203"/>
    </location>
</feature>
<feature type="strand" evidence="2">
    <location>
        <begin position="207"/>
        <end position="213"/>
    </location>
</feature>
<feature type="strand" evidence="2">
    <location>
        <begin position="216"/>
        <end position="219"/>
    </location>
</feature>
<feature type="helix" evidence="2">
    <location>
        <begin position="220"/>
        <end position="227"/>
    </location>
</feature>
<feature type="strand" evidence="2">
    <location>
        <begin position="231"/>
        <end position="237"/>
    </location>
</feature>
<feature type="helix" evidence="2">
    <location>
        <begin position="254"/>
        <end position="273"/>
    </location>
</feature>
<feature type="helix" evidence="2">
    <location>
        <begin position="281"/>
        <end position="284"/>
    </location>
</feature>
<feature type="turn" evidence="2">
    <location>
        <begin position="293"/>
        <end position="295"/>
    </location>
</feature>
<feature type="helix" evidence="2">
    <location>
        <begin position="298"/>
        <end position="301"/>
    </location>
</feature>
<feature type="strand" evidence="2">
    <location>
        <begin position="305"/>
        <end position="310"/>
    </location>
</feature>
<feature type="turn" evidence="2">
    <location>
        <begin position="320"/>
        <end position="322"/>
    </location>
</feature>
<feature type="strand" evidence="2">
    <location>
        <begin position="323"/>
        <end position="326"/>
    </location>
</feature>
<feature type="helix" evidence="2">
    <location>
        <begin position="337"/>
        <end position="339"/>
    </location>
</feature>
<feature type="helix" evidence="2">
    <location>
        <begin position="340"/>
        <end position="344"/>
    </location>
</feature>
<feature type="helix" evidence="2">
    <location>
        <begin position="361"/>
        <end position="363"/>
    </location>
</feature>
<gene>
    <name type="primary">spsE</name>
    <name type="ordered locus">BSU37870</name>
    <name type="ORF">ipa-67d</name>
</gene>
<keyword id="KW-0002">3D-structure</keyword>
<keyword id="KW-1185">Reference proteome</keyword>
<evidence type="ECO:0000255" key="1">
    <source>
        <dbReference type="PROSITE-ProRule" id="PRU00021"/>
    </source>
</evidence>
<evidence type="ECO:0007829" key="2">
    <source>
        <dbReference type="PDB" id="1VLI"/>
    </source>
</evidence>
<reference key="1">
    <citation type="journal article" date="1993" name="Mol. Microbiol.">
        <title>Bacillus subtilis genome project: cloning and sequencing of the 97 kb region from 325 degrees to 333 degrees.</title>
        <authorList>
            <person name="Glaser P."/>
            <person name="Kunst F."/>
            <person name="Arnaud M."/>
            <person name="Coudart M.P."/>
            <person name="Gonzales W."/>
            <person name="Hullo M.-F."/>
            <person name="Ionescu M."/>
            <person name="Lubochinsky B."/>
            <person name="Marcelino L."/>
            <person name="Moszer I."/>
            <person name="Presecan E."/>
            <person name="Santana M."/>
            <person name="Schneider E."/>
            <person name="Schweizer J."/>
            <person name="Vertes A."/>
            <person name="Rapoport G."/>
            <person name="Danchin A."/>
        </authorList>
    </citation>
    <scope>NUCLEOTIDE SEQUENCE [GENOMIC DNA]</scope>
    <source>
        <strain>168</strain>
    </source>
</reference>
<reference key="2">
    <citation type="journal article" date="1997" name="Nature">
        <title>The complete genome sequence of the Gram-positive bacterium Bacillus subtilis.</title>
        <authorList>
            <person name="Kunst F."/>
            <person name="Ogasawara N."/>
            <person name="Moszer I."/>
            <person name="Albertini A.M."/>
            <person name="Alloni G."/>
            <person name="Azevedo V."/>
            <person name="Bertero M.G."/>
            <person name="Bessieres P."/>
            <person name="Bolotin A."/>
            <person name="Borchert S."/>
            <person name="Borriss R."/>
            <person name="Boursier L."/>
            <person name="Brans A."/>
            <person name="Braun M."/>
            <person name="Brignell S.C."/>
            <person name="Bron S."/>
            <person name="Brouillet S."/>
            <person name="Bruschi C.V."/>
            <person name="Caldwell B."/>
            <person name="Capuano V."/>
            <person name="Carter N.M."/>
            <person name="Choi S.-K."/>
            <person name="Codani J.-J."/>
            <person name="Connerton I.F."/>
            <person name="Cummings N.J."/>
            <person name="Daniel R.A."/>
            <person name="Denizot F."/>
            <person name="Devine K.M."/>
            <person name="Duesterhoeft A."/>
            <person name="Ehrlich S.D."/>
            <person name="Emmerson P.T."/>
            <person name="Entian K.-D."/>
            <person name="Errington J."/>
            <person name="Fabret C."/>
            <person name="Ferrari E."/>
            <person name="Foulger D."/>
            <person name="Fritz C."/>
            <person name="Fujita M."/>
            <person name="Fujita Y."/>
            <person name="Fuma S."/>
            <person name="Galizzi A."/>
            <person name="Galleron N."/>
            <person name="Ghim S.-Y."/>
            <person name="Glaser P."/>
            <person name="Goffeau A."/>
            <person name="Golightly E.J."/>
            <person name="Grandi G."/>
            <person name="Guiseppi G."/>
            <person name="Guy B.J."/>
            <person name="Haga K."/>
            <person name="Haiech J."/>
            <person name="Harwood C.R."/>
            <person name="Henaut A."/>
            <person name="Hilbert H."/>
            <person name="Holsappel S."/>
            <person name="Hosono S."/>
            <person name="Hullo M.-F."/>
            <person name="Itaya M."/>
            <person name="Jones L.-M."/>
            <person name="Joris B."/>
            <person name="Karamata D."/>
            <person name="Kasahara Y."/>
            <person name="Klaerr-Blanchard M."/>
            <person name="Klein C."/>
            <person name="Kobayashi Y."/>
            <person name="Koetter P."/>
            <person name="Koningstein G."/>
            <person name="Krogh S."/>
            <person name="Kumano M."/>
            <person name="Kurita K."/>
            <person name="Lapidus A."/>
            <person name="Lardinois S."/>
            <person name="Lauber J."/>
            <person name="Lazarevic V."/>
            <person name="Lee S.-M."/>
            <person name="Levine A."/>
            <person name="Liu H."/>
            <person name="Masuda S."/>
            <person name="Mauel C."/>
            <person name="Medigue C."/>
            <person name="Medina N."/>
            <person name="Mellado R.P."/>
            <person name="Mizuno M."/>
            <person name="Moestl D."/>
            <person name="Nakai S."/>
            <person name="Noback M."/>
            <person name="Noone D."/>
            <person name="O'Reilly M."/>
            <person name="Ogawa K."/>
            <person name="Ogiwara A."/>
            <person name="Oudega B."/>
            <person name="Park S.-H."/>
            <person name="Parro V."/>
            <person name="Pohl T.M."/>
            <person name="Portetelle D."/>
            <person name="Porwollik S."/>
            <person name="Prescott A.M."/>
            <person name="Presecan E."/>
            <person name="Pujic P."/>
            <person name="Purnelle B."/>
            <person name="Rapoport G."/>
            <person name="Rey M."/>
            <person name="Reynolds S."/>
            <person name="Rieger M."/>
            <person name="Rivolta C."/>
            <person name="Rocha E."/>
            <person name="Roche B."/>
            <person name="Rose M."/>
            <person name="Sadaie Y."/>
            <person name="Sato T."/>
            <person name="Scanlan E."/>
            <person name="Schleich S."/>
            <person name="Schroeter R."/>
            <person name="Scoffone F."/>
            <person name="Sekiguchi J."/>
            <person name="Sekowska A."/>
            <person name="Seror S.J."/>
            <person name="Serror P."/>
            <person name="Shin B.-S."/>
            <person name="Soldo B."/>
            <person name="Sorokin A."/>
            <person name="Tacconi E."/>
            <person name="Takagi T."/>
            <person name="Takahashi H."/>
            <person name="Takemaru K."/>
            <person name="Takeuchi M."/>
            <person name="Tamakoshi A."/>
            <person name="Tanaka T."/>
            <person name="Terpstra P."/>
            <person name="Tognoni A."/>
            <person name="Tosato V."/>
            <person name="Uchiyama S."/>
            <person name="Vandenbol M."/>
            <person name="Vannier F."/>
            <person name="Vassarotti A."/>
            <person name="Viari A."/>
            <person name="Wambutt R."/>
            <person name="Wedler E."/>
            <person name="Wedler H."/>
            <person name="Weitzenegger T."/>
            <person name="Winters P."/>
            <person name="Wipat A."/>
            <person name="Yamamoto H."/>
            <person name="Yamane K."/>
            <person name="Yasumoto K."/>
            <person name="Yata K."/>
            <person name="Yoshida K."/>
            <person name="Yoshikawa H.-F."/>
            <person name="Zumstein E."/>
            <person name="Yoshikawa H."/>
            <person name="Danchin A."/>
        </authorList>
    </citation>
    <scope>NUCLEOTIDE SEQUENCE [LARGE SCALE GENOMIC DNA]</scope>
    <source>
        <strain>168</strain>
    </source>
</reference>
<dbReference type="EMBL" id="X73124">
    <property type="protein sequence ID" value="CAA51623.1"/>
    <property type="molecule type" value="Genomic_DNA"/>
</dbReference>
<dbReference type="EMBL" id="AL009126">
    <property type="protein sequence ID" value="CAB15813.1"/>
    <property type="molecule type" value="Genomic_DNA"/>
</dbReference>
<dbReference type="PIR" id="S39722">
    <property type="entry name" value="S39722"/>
</dbReference>
<dbReference type="RefSeq" id="NP_391666.1">
    <property type="nucleotide sequence ID" value="NC_000964.3"/>
</dbReference>
<dbReference type="RefSeq" id="WP_003243135.1">
    <property type="nucleotide sequence ID" value="NZ_OZ025638.1"/>
</dbReference>
<dbReference type="PDB" id="1VLI">
    <property type="method" value="X-ray"/>
    <property type="resolution" value="2.38 A"/>
    <property type="chains" value="A=1-373"/>
</dbReference>
<dbReference type="PDBsum" id="1VLI"/>
<dbReference type="SMR" id="P39625"/>
<dbReference type="FunCoup" id="P39625">
    <property type="interactions" value="118"/>
</dbReference>
<dbReference type="STRING" id="224308.BSU37870"/>
<dbReference type="PaxDb" id="224308-BSU37870"/>
<dbReference type="DNASU" id="937233"/>
<dbReference type="EnsemblBacteria" id="CAB15813">
    <property type="protein sequence ID" value="CAB15813"/>
    <property type="gene ID" value="BSU_37870"/>
</dbReference>
<dbReference type="GeneID" id="937233"/>
<dbReference type="KEGG" id="bsu:BSU37870"/>
<dbReference type="PATRIC" id="fig|224308.179.peg.4100"/>
<dbReference type="eggNOG" id="COG2089">
    <property type="taxonomic scope" value="Bacteria"/>
</dbReference>
<dbReference type="InParanoid" id="P39625"/>
<dbReference type="OrthoDB" id="9814210at2"/>
<dbReference type="PhylomeDB" id="P39625"/>
<dbReference type="BioCyc" id="BSUB:BSU37870-MONOMER"/>
<dbReference type="UniPathway" id="UPA00953"/>
<dbReference type="EvolutionaryTrace" id="P39625"/>
<dbReference type="Proteomes" id="UP000001570">
    <property type="component" value="Chromosome"/>
</dbReference>
<dbReference type="GO" id="GO:0047444">
    <property type="term" value="F:N-acylneuraminate-9-phosphate synthase activity"/>
    <property type="evidence" value="ECO:0000318"/>
    <property type="project" value="GO_Central"/>
</dbReference>
<dbReference type="GO" id="GO:0016051">
    <property type="term" value="P:carbohydrate biosynthetic process"/>
    <property type="evidence" value="ECO:0007669"/>
    <property type="project" value="InterPro"/>
</dbReference>
<dbReference type="GO" id="GO:0070085">
    <property type="term" value="P:glycosylation"/>
    <property type="evidence" value="ECO:0000318"/>
    <property type="project" value="GO_Central"/>
</dbReference>
<dbReference type="CDD" id="cd11615">
    <property type="entry name" value="SAF_NeuB_like"/>
    <property type="match status" value="1"/>
</dbReference>
<dbReference type="Gene3D" id="3.20.20.70">
    <property type="entry name" value="Aldolase class I"/>
    <property type="match status" value="1"/>
</dbReference>
<dbReference type="Gene3D" id="3.90.1210.10">
    <property type="entry name" value="Antifreeze-like/N-acetylneuraminic acid synthase C-terminal domain"/>
    <property type="match status" value="1"/>
</dbReference>
<dbReference type="InterPro" id="IPR006190">
    <property type="entry name" value="AFP_Neu5c_C"/>
</dbReference>
<dbReference type="InterPro" id="IPR036732">
    <property type="entry name" value="AFP_Neu5c_C_sf"/>
</dbReference>
<dbReference type="InterPro" id="IPR013785">
    <property type="entry name" value="Aldolase_TIM"/>
</dbReference>
<dbReference type="InterPro" id="IPR013132">
    <property type="entry name" value="Neu5Ac_N"/>
</dbReference>
<dbReference type="InterPro" id="IPR051690">
    <property type="entry name" value="Nonulosonic_Acid_Synth"/>
</dbReference>
<dbReference type="InterPro" id="IPR013974">
    <property type="entry name" value="SAF"/>
</dbReference>
<dbReference type="PANTHER" id="PTHR42966">
    <property type="entry name" value="N-ACETYLNEURAMINATE SYNTHASE"/>
    <property type="match status" value="1"/>
</dbReference>
<dbReference type="PANTHER" id="PTHR42966:SF1">
    <property type="entry name" value="SIALIC ACID SYNTHASE"/>
    <property type="match status" value="1"/>
</dbReference>
<dbReference type="Pfam" id="PF03102">
    <property type="entry name" value="NeuB"/>
    <property type="match status" value="1"/>
</dbReference>
<dbReference type="Pfam" id="PF08666">
    <property type="entry name" value="SAF"/>
    <property type="match status" value="1"/>
</dbReference>
<dbReference type="SMART" id="SM00858">
    <property type="entry name" value="SAF"/>
    <property type="match status" value="1"/>
</dbReference>
<dbReference type="SUPFAM" id="SSF51269">
    <property type="entry name" value="AFP III-like domain"/>
    <property type="match status" value="1"/>
</dbReference>
<dbReference type="SUPFAM" id="SSF51569">
    <property type="entry name" value="Aldolase"/>
    <property type="match status" value="1"/>
</dbReference>
<dbReference type="PROSITE" id="PS50844">
    <property type="entry name" value="AFP_LIKE"/>
    <property type="match status" value="1"/>
</dbReference>
<sequence length="373" mass="40890">MAAFQIANKTVGKDAPVFIIAEAGINHDGKLDQAFALIDAAAEAGADAVKFQMFQADRMYQKDPGLYKTAAGKDVSIFSLVQSMEMPAEWILPLLDYCREKQVIFLSTVCDEGSADLLQSTSPSAFKIASYEINHLPLLKYVARLNRPMIFSTAGAEISDVHEAWRTIRAEGNNQIAIMHCVAKYPAPPEYSNLSVIPMLAAAFPEAVIGFSDHSEHPTEAPCAAVRLGAKLIEKHFTIDKNLPGADHSFALNPDELKEMVDGIRKTEAELKQGITKPVSEKLLGSSYKTTTAIEGEIRNFAYRGIFTTAPIQKGEAFSEDNIAVLRPGQKPQGLHPRFFELLTSGVRAVRDIPADTGIVWDDILLKDSPFHE</sequence>
<comment type="pathway">
    <text>Spore coat biogenesis; spore coat polysaccharide biosynthesis.</text>
</comment>
<accession>P39625</accession>
<name>SPSE_BACSU</name>
<organism>
    <name type="scientific">Bacillus subtilis (strain 168)</name>
    <dbReference type="NCBI Taxonomy" id="224308"/>
    <lineage>
        <taxon>Bacteria</taxon>
        <taxon>Bacillati</taxon>
        <taxon>Bacillota</taxon>
        <taxon>Bacilli</taxon>
        <taxon>Bacillales</taxon>
        <taxon>Bacillaceae</taxon>
        <taxon>Bacillus</taxon>
    </lineage>
</organism>
<protein>
    <recommendedName>
        <fullName>Spore coat polysaccharide biosynthesis protein SpsE</fullName>
    </recommendedName>
</protein>